<organism>
    <name type="scientific">Mus musculus</name>
    <name type="common">Mouse</name>
    <dbReference type="NCBI Taxonomy" id="10090"/>
    <lineage>
        <taxon>Eukaryota</taxon>
        <taxon>Metazoa</taxon>
        <taxon>Chordata</taxon>
        <taxon>Craniata</taxon>
        <taxon>Vertebrata</taxon>
        <taxon>Euteleostomi</taxon>
        <taxon>Mammalia</taxon>
        <taxon>Eutheria</taxon>
        <taxon>Euarchontoglires</taxon>
        <taxon>Glires</taxon>
        <taxon>Rodentia</taxon>
        <taxon>Myomorpha</taxon>
        <taxon>Muroidea</taxon>
        <taxon>Muridae</taxon>
        <taxon>Murinae</taxon>
        <taxon>Mus</taxon>
        <taxon>Mus</taxon>
    </lineage>
</organism>
<comment type="function">
    <text evidence="1">Carboxypeptidase that may play an important role in the hydrolysis of circulating peptides. Catalyzes the hydrolysis of dipeptides with unsubstituted terminals into amino acids. May play a role in the liberation of thyroxine hormone from its thyroglobulin (Tg) precursor (By similarity).</text>
</comment>
<comment type="subunit">
    <text evidence="1">Homodimer. The monomeric form is inactive while the homodimer is active (By similarity).</text>
</comment>
<comment type="subcellular location">
    <subcellularLocation>
        <location evidence="1">Endoplasmic reticulum</location>
    </subcellularLocation>
    <subcellularLocation>
        <location evidence="1">Golgi apparatus</location>
    </subcellularLocation>
    <subcellularLocation>
        <location evidence="1">Lysosome</location>
    </subcellularLocation>
    <subcellularLocation>
        <location evidence="1">Secreted</location>
    </subcellularLocation>
    <text evidence="1">Secretion is stimulated by TSH/thyroid-stimulating hormone, INS/insulin and SST/somatostatin.</text>
</comment>
<comment type="PTM">
    <text evidence="1">N-glycosylated. The secreted form is modified by hybrid or complex type oligosaccharide chains.</text>
</comment>
<comment type="similarity">
    <text evidence="3">Belongs to the peptidase M28 family.</text>
</comment>
<comment type="sequence caution" evidence="3">
    <conflict type="frameshift">
        <sequence resource="EMBL-CDS" id="AAC17945"/>
    </conflict>
</comment>
<comment type="sequence caution" evidence="3">
    <conflict type="miscellaneous discrepancy">
        <sequence resource="EMBL-CDS" id="AAC17945"/>
    </conflict>
    <text>Aberrant splicing.</text>
</comment>
<sequence>MRSLFFLFIVHLLALGSGKAVFKNGVSQRTFREIKEEIANYEDVAKAIINLAVYGKYQNRSYERLGLLVDTVGPRLSGSKNLEKAIQIMYQNLQQDGLENVHLEQVRIPHWERGEESAVMLEPRIHKMAILGLGSSIGTPPGGITAEVLVVASFDELQRRASEARGKIIVYNQPYTGYEKTVQYRVQGAVEAAKVGAVASLIQSVASFSIYSPHTGIQKYQDGVPKIPTACITVEDAEMMSRMASRGNKIVIHLEMGAKTYPDTDSFNTVAEITGSMYPEEVVLVSGHLDSWDVGQGALDDGGGAFISWEALSLVKDLGLRPKRTLRLVLWTAEEQGGIGASQYYELHKANISKYSLVMEADSGTFLPTGLQFTGSDKARAIMKEVMNLLQPLNVTKVFSNGEGTDINFWIQAGVPGASLRDDLYKYFFFHHSHGDTMTVMDPKQMNVAAAVWAVVAYVVADMDEMLPRS</sequence>
<protein>
    <recommendedName>
        <fullName>Carboxypeptidase Q</fullName>
        <ecNumber>3.4.17.-</ecNumber>
    </recommendedName>
    <alternativeName>
        <fullName>Hematopoietic lineage switch 2</fullName>
    </alternativeName>
    <alternativeName>
        <fullName>Plasma glutamate carboxypeptidase</fullName>
    </alternativeName>
</protein>
<keyword id="KW-0121">Carboxypeptidase</keyword>
<keyword id="KW-0256">Endoplasmic reticulum</keyword>
<keyword id="KW-0325">Glycoprotein</keyword>
<keyword id="KW-0333">Golgi apparatus</keyword>
<keyword id="KW-0378">Hydrolase</keyword>
<keyword id="KW-0458">Lysosome</keyword>
<keyword id="KW-0479">Metal-binding</keyword>
<keyword id="KW-0482">Metalloprotease</keyword>
<keyword id="KW-0645">Protease</keyword>
<keyword id="KW-1185">Reference proteome</keyword>
<keyword id="KW-0964">Secreted</keyword>
<keyword id="KW-0732">Signal</keyword>
<keyword id="KW-0862">Zinc</keyword>
<keyword id="KW-0865">Zymogen</keyword>
<reference key="1">
    <citation type="submission" date="1997-06" db="EMBL/GenBank/DDBJ databases">
        <title>Hematopoietic lineage switch 2 (HLS2), a novel mRNA species induced during an erythroid to myeloid lineage switch.</title>
        <authorList>
            <person name="Williams J.H."/>
            <person name="Chan C.-Y."/>
            <person name="Klinken S.P."/>
        </authorList>
    </citation>
    <scope>NUCLEOTIDE SEQUENCE [MRNA]</scope>
</reference>
<reference key="2">
    <citation type="submission" date="1998-11" db="EMBL/GenBank/DDBJ databases">
        <title>Cloning of the mouse aminopeptidase gene.</title>
        <authorList>
            <person name="Liu C.H."/>
            <person name="Lin B.Y."/>
            <person name="Chang L.Y."/>
        </authorList>
    </citation>
    <scope>NUCLEOTIDE SEQUENCE [MRNA]</scope>
    <source>
        <tissue>Liver</tissue>
    </source>
</reference>
<reference key="3">
    <citation type="journal article" date="2005" name="Science">
        <title>The transcriptional landscape of the mammalian genome.</title>
        <authorList>
            <person name="Carninci P."/>
            <person name="Kasukawa T."/>
            <person name="Katayama S."/>
            <person name="Gough J."/>
            <person name="Frith M.C."/>
            <person name="Maeda N."/>
            <person name="Oyama R."/>
            <person name="Ravasi T."/>
            <person name="Lenhard B."/>
            <person name="Wells C."/>
            <person name="Kodzius R."/>
            <person name="Shimokawa K."/>
            <person name="Bajic V.B."/>
            <person name="Brenner S.E."/>
            <person name="Batalov S."/>
            <person name="Forrest A.R."/>
            <person name="Zavolan M."/>
            <person name="Davis M.J."/>
            <person name="Wilming L.G."/>
            <person name="Aidinis V."/>
            <person name="Allen J.E."/>
            <person name="Ambesi-Impiombato A."/>
            <person name="Apweiler R."/>
            <person name="Aturaliya R.N."/>
            <person name="Bailey T.L."/>
            <person name="Bansal M."/>
            <person name="Baxter L."/>
            <person name="Beisel K.W."/>
            <person name="Bersano T."/>
            <person name="Bono H."/>
            <person name="Chalk A.M."/>
            <person name="Chiu K.P."/>
            <person name="Choudhary V."/>
            <person name="Christoffels A."/>
            <person name="Clutterbuck D.R."/>
            <person name="Crowe M.L."/>
            <person name="Dalla E."/>
            <person name="Dalrymple B.P."/>
            <person name="de Bono B."/>
            <person name="Della Gatta G."/>
            <person name="di Bernardo D."/>
            <person name="Down T."/>
            <person name="Engstrom P."/>
            <person name="Fagiolini M."/>
            <person name="Faulkner G."/>
            <person name="Fletcher C.F."/>
            <person name="Fukushima T."/>
            <person name="Furuno M."/>
            <person name="Futaki S."/>
            <person name="Gariboldi M."/>
            <person name="Georgii-Hemming P."/>
            <person name="Gingeras T.R."/>
            <person name="Gojobori T."/>
            <person name="Green R.E."/>
            <person name="Gustincich S."/>
            <person name="Harbers M."/>
            <person name="Hayashi Y."/>
            <person name="Hensch T.K."/>
            <person name="Hirokawa N."/>
            <person name="Hill D."/>
            <person name="Huminiecki L."/>
            <person name="Iacono M."/>
            <person name="Ikeo K."/>
            <person name="Iwama A."/>
            <person name="Ishikawa T."/>
            <person name="Jakt M."/>
            <person name="Kanapin A."/>
            <person name="Katoh M."/>
            <person name="Kawasawa Y."/>
            <person name="Kelso J."/>
            <person name="Kitamura H."/>
            <person name="Kitano H."/>
            <person name="Kollias G."/>
            <person name="Krishnan S.P."/>
            <person name="Kruger A."/>
            <person name="Kummerfeld S.K."/>
            <person name="Kurochkin I.V."/>
            <person name="Lareau L.F."/>
            <person name="Lazarevic D."/>
            <person name="Lipovich L."/>
            <person name="Liu J."/>
            <person name="Liuni S."/>
            <person name="McWilliam S."/>
            <person name="Madan Babu M."/>
            <person name="Madera M."/>
            <person name="Marchionni L."/>
            <person name="Matsuda H."/>
            <person name="Matsuzawa S."/>
            <person name="Miki H."/>
            <person name="Mignone F."/>
            <person name="Miyake S."/>
            <person name="Morris K."/>
            <person name="Mottagui-Tabar S."/>
            <person name="Mulder N."/>
            <person name="Nakano N."/>
            <person name="Nakauchi H."/>
            <person name="Ng P."/>
            <person name="Nilsson R."/>
            <person name="Nishiguchi S."/>
            <person name="Nishikawa S."/>
            <person name="Nori F."/>
            <person name="Ohara O."/>
            <person name="Okazaki Y."/>
            <person name="Orlando V."/>
            <person name="Pang K.C."/>
            <person name="Pavan W.J."/>
            <person name="Pavesi G."/>
            <person name="Pesole G."/>
            <person name="Petrovsky N."/>
            <person name="Piazza S."/>
            <person name="Reed J."/>
            <person name="Reid J.F."/>
            <person name="Ring B.Z."/>
            <person name="Ringwald M."/>
            <person name="Rost B."/>
            <person name="Ruan Y."/>
            <person name="Salzberg S.L."/>
            <person name="Sandelin A."/>
            <person name="Schneider C."/>
            <person name="Schoenbach C."/>
            <person name="Sekiguchi K."/>
            <person name="Semple C.A."/>
            <person name="Seno S."/>
            <person name="Sessa L."/>
            <person name="Sheng Y."/>
            <person name="Shibata Y."/>
            <person name="Shimada H."/>
            <person name="Shimada K."/>
            <person name="Silva D."/>
            <person name="Sinclair B."/>
            <person name="Sperling S."/>
            <person name="Stupka E."/>
            <person name="Sugiura K."/>
            <person name="Sultana R."/>
            <person name="Takenaka Y."/>
            <person name="Taki K."/>
            <person name="Tammoja K."/>
            <person name="Tan S.L."/>
            <person name="Tang S."/>
            <person name="Taylor M.S."/>
            <person name="Tegner J."/>
            <person name="Teichmann S.A."/>
            <person name="Ueda H.R."/>
            <person name="van Nimwegen E."/>
            <person name="Verardo R."/>
            <person name="Wei C.L."/>
            <person name="Yagi K."/>
            <person name="Yamanishi H."/>
            <person name="Zabarovsky E."/>
            <person name="Zhu S."/>
            <person name="Zimmer A."/>
            <person name="Hide W."/>
            <person name="Bult C."/>
            <person name="Grimmond S.M."/>
            <person name="Teasdale R.D."/>
            <person name="Liu E.T."/>
            <person name="Brusic V."/>
            <person name="Quackenbush J."/>
            <person name="Wahlestedt C."/>
            <person name="Mattick J.S."/>
            <person name="Hume D.A."/>
            <person name="Kai C."/>
            <person name="Sasaki D."/>
            <person name="Tomaru Y."/>
            <person name="Fukuda S."/>
            <person name="Kanamori-Katayama M."/>
            <person name="Suzuki M."/>
            <person name="Aoki J."/>
            <person name="Arakawa T."/>
            <person name="Iida J."/>
            <person name="Imamura K."/>
            <person name="Itoh M."/>
            <person name="Kato T."/>
            <person name="Kawaji H."/>
            <person name="Kawagashira N."/>
            <person name="Kawashima T."/>
            <person name="Kojima M."/>
            <person name="Kondo S."/>
            <person name="Konno H."/>
            <person name="Nakano K."/>
            <person name="Ninomiya N."/>
            <person name="Nishio T."/>
            <person name="Okada M."/>
            <person name="Plessy C."/>
            <person name="Shibata K."/>
            <person name="Shiraki T."/>
            <person name="Suzuki S."/>
            <person name="Tagami M."/>
            <person name="Waki K."/>
            <person name="Watahiki A."/>
            <person name="Okamura-Oho Y."/>
            <person name="Suzuki H."/>
            <person name="Kawai J."/>
            <person name="Hayashizaki Y."/>
        </authorList>
    </citation>
    <scope>NUCLEOTIDE SEQUENCE [LARGE SCALE MRNA]</scope>
    <source>
        <strain>C57BL/6J</strain>
        <tissue>Bone marrow</tissue>
        <tissue>Olfactory bulb</tissue>
        <tissue>Urinary bladder</tissue>
        <tissue>Wolffian duct</tissue>
    </source>
</reference>
<reference key="4">
    <citation type="journal article" date="2004" name="Genome Res.">
        <title>The status, quality, and expansion of the NIH full-length cDNA project: the Mammalian Gene Collection (MGC).</title>
        <authorList>
            <consortium name="The MGC Project Team"/>
        </authorList>
    </citation>
    <scope>NUCLEOTIDE SEQUENCE [LARGE SCALE MRNA]</scope>
    <source>
        <strain>FVB/N</strain>
        <tissue>Colon</tissue>
    </source>
</reference>
<reference key="5">
    <citation type="journal article" date="2010" name="Cell">
        <title>A tissue-specific atlas of mouse protein phosphorylation and expression.</title>
        <authorList>
            <person name="Huttlin E.L."/>
            <person name="Jedrychowski M.P."/>
            <person name="Elias J.E."/>
            <person name="Goswami T."/>
            <person name="Rad R."/>
            <person name="Beausoleil S.A."/>
            <person name="Villen J."/>
            <person name="Haas W."/>
            <person name="Sowa M.E."/>
            <person name="Gygi S.P."/>
        </authorList>
    </citation>
    <scope>IDENTIFICATION BY MASS SPECTROMETRY [LARGE SCALE ANALYSIS]</scope>
    <source>
        <tissue>Brain</tissue>
        <tissue>Brown adipose tissue</tissue>
        <tissue>Heart</tissue>
        <tissue>Kidney</tissue>
        <tissue>Liver</tissue>
        <tissue>Lung</tissue>
        <tissue>Pancreas</tissue>
        <tissue>Spleen</tissue>
        <tissue>Testis</tissue>
    </source>
</reference>
<name>CBPQ_MOUSE</name>
<gene>
    <name type="primary">Cpq</name>
    <name type="synonym">Hls2</name>
    <name type="synonym">Pgcp</name>
</gene>
<accession>Q9WVJ3</accession>
<accession>O70216</accession>
<accession>Q3U8N9</accession>
<feature type="signal peptide" evidence="2">
    <location>
        <begin position="1"/>
        <end position="18"/>
    </location>
</feature>
<feature type="propeptide" id="PRO_0000312260" evidence="1">
    <location>
        <begin position="19"/>
        <end position="42"/>
    </location>
</feature>
<feature type="chain" id="PRO_0000312261" description="Carboxypeptidase Q">
    <location>
        <begin position="43"/>
        <end position="470"/>
    </location>
</feature>
<feature type="active site" description="Nucleophile" evidence="1">
    <location>
        <position position="334"/>
    </location>
</feature>
<feature type="binding site" evidence="1">
    <location>
        <position position="288"/>
    </location>
    <ligand>
        <name>Zn(2+)</name>
        <dbReference type="ChEBI" id="CHEBI:29105"/>
        <label>1</label>
    </ligand>
</feature>
<feature type="binding site" evidence="1">
    <location>
        <position position="300"/>
    </location>
    <ligand>
        <name>Zn(2+)</name>
        <dbReference type="ChEBI" id="CHEBI:29105"/>
        <label>1</label>
    </ligand>
</feature>
<feature type="binding site" evidence="1">
    <location>
        <position position="300"/>
    </location>
    <ligand>
        <name>Zn(2+)</name>
        <dbReference type="ChEBI" id="CHEBI:29105"/>
        <label>2</label>
        <note>catalytic</note>
    </ligand>
</feature>
<feature type="binding site" evidence="1">
    <location>
        <position position="335"/>
    </location>
    <ligand>
        <name>Zn(2+)</name>
        <dbReference type="ChEBI" id="CHEBI:29105"/>
        <label>2</label>
        <note>catalytic</note>
    </ligand>
</feature>
<feature type="binding site" evidence="1">
    <location>
        <position position="362"/>
    </location>
    <ligand>
        <name>Zn(2+)</name>
        <dbReference type="ChEBI" id="CHEBI:29105"/>
        <label>1</label>
    </ligand>
</feature>
<feature type="binding site" evidence="1">
    <location>
        <position position="432"/>
    </location>
    <ligand>
        <name>Zn(2+)</name>
        <dbReference type="ChEBI" id="CHEBI:29105"/>
        <label>2</label>
        <note>catalytic</note>
    </ligand>
</feature>
<feature type="glycosylation site" description="N-linked (GlcNAc...) asparagine" evidence="2">
    <location>
        <position position="59"/>
    </location>
</feature>
<feature type="glycosylation site" description="N-linked (GlcNAc...) asparagine" evidence="2">
    <location>
        <position position="351"/>
    </location>
</feature>
<feature type="glycosylation site" description="N-linked (GlcNAc...) asparagine" evidence="2">
    <location>
        <position position="394"/>
    </location>
</feature>
<feature type="sequence conflict" description="In Ref. 3; BAE30978." evidence="3" ref="3">
    <original>K</original>
    <variation>E</variation>
    <location>
        <position position="167"/>
    </location>
</feature>
<feature type="sequence conflict" description="In Ref. 1; AAC17945." evidence="3" ref="1">
    <location>
        <begin position="281"/>
        <end position="292"/>
    </location>
</feature>
<evidence type="ECO:0000250" key="1"/>
<evidence type="ECO:0000255" key="2"/>
<evidence type="ECO:0000305" key="3"/>
<dbReference type="EC" id="3.4.17.-"/>
<dbReference type="EMBL" id="AF009513">
    <property type="protein sequence ID" value="AAC17945.1"/>
    <property type="status" value="ALT_SEQ"/>
    <property type="molecule type" value="mRNA"/>
</dbReference>
<dbReference type="EMBL" id="AF107835">
    <property type="protein sequence ID" value="AAD43215.1"/>
    <property type="molecule type" value="mRNA"/>
</dbReference>
<dbReference type="EMBL" id="AK032972">
    <property type="protein sequence ID" value="BAC28105.1"/>
    <property type="molecule type" value="mRNA"/>
</dbReference>
<dbReference type="EMBL" id="AK075686">
    <property type="protein sequence ID" value="BAC35891.1"/>
    <property type="molecule type" value="mRNA"/>
</dbReference>
<dbReference type="EMBL" id="AK135096">
    <property type="protein sequence ID" value="BAE22419.1"/>
    <property type="molecule type" value="mRNA"/>
</dbReference>
<dbReference type="EMBL" id="AK137164">
    <property type="protein sequence ID" value="BAE23259.1"/>
    <property type="molecule type" value="mRNA"/>
</dbReference>
<dbReference type="EMBL" id="AK152139">
    <property type="protein sequence ID" value="BAE30978.1"/>
    <property type="molecule type" value="mRNA"/>
</dbReference>
<dbReference type="EMBL" id="AK152145">
    <property type="protein sequence ID" value="BAE30982.1"/>
    <property type="molecule type" value="mRNA"/>
</dbReference>
<dbReference type="EMBL" id="BC037067">
    <property type="protein sequence ID" value="AAH37067.1"/>
    <property type="molecule type" value="mRNA"/>
</dbReference>
<dbReference type="CCDS" id="CCDS27414.1"/>
<dbReference type="RefSeq" id="NP_061225.2">
    <property type="nucleotide sequence ID" value="NM_018755.2"/>
</dbReference>
<dbReference type="RefSeq" id="NP_788262.1">
    <property type="nucleotide sequence ID" value="NM_176073.4"/>
</dbReference>
<dbReference type="SMR" id="Q9WVJ3"/>
<dbReference type="FunCoup" id="Q9WVJ3">
    <property type="interactions" value="768"/>
</dbReference>
<dbReference type="STRING" id="10090.ENSMUSP00000039046"/>
<dbReference type="MEROPS" id="M28.014"/>
<dbReference type="GlyConnect" id="2187">
    <property type="glycosylation" value="4 N-Linked glycans (1 site)"/>
</dbReference>
<dbReference type="GlyCosmos" id="Q9WVJ3">
    <property type="glycosylation" value="3 sites, 4 glycans"/>
</dbReference>
<dbReference type="GlyGen" id="Q9WVJ3">
    <property type="glycosylation" value="4 sites, 5 N-linked glycans (1 site), 1 O-linked glycan (1 site)"/>
</dbReference>
<dbReference type="iPTMnet" id="Q9WVJ3"/>
<dbReference type="PhosphoSitePlus" id="Q9WVJ3"/>
<dbReference type="SwissPalm" id="Q9WVJ3"/>
<dbReference type="CPTAC" id="non-CPTAC-5580"/>
<dbReference type="jPOST" id="Q9WVJ3"/>
<dbReference type="PaxDb" id="10090-ENSMUSP00000039046"/>
<dbReference type="PeptideAtlas" id="Q9WVJ3"/>
<dbReference type="ProteomicsDB" id="281231"/>
<dbReference type="Pumba" id="Q9WVJ3"/>
<dbReference type="Antibodypedia" id="12985">
    <property type="antibodies" value="120 antibodies from 26 providers"/>
</dbReference>
<dbReference type="DNASU" id="54381"/>
<dbReference type="Ensembl" id="ENSMUST00000042167.10">
    <property type="protein sequence ID" value="ENSMUSP00000039046.10"/>
    <property type="gene ID" value="ENSMUSG00000039007.11"/>
</dbReference>
<dbReference type="Ensembl" id="ENSMUST00000228916.2">
    <property type="protein sequence ID" value="ENSMUSP00000154400.2"/>
    <property type="gene ID" value="ENSMUSG00000039007.11"/>
</dbReference>
<dbReference type="GeneID" id="54381"/>
<dbReference type="KEGG" id="mmu:54381"/>
<dbReference type="UCSC" id="uc007vla.1">
    <property type="organism name" value="mouse"/>
</dbReference>
<dbReference type="AGR" id="MGI:1889205"/>
<dbReference type="CTD" id="10404"/>
<dbReference type="MGI" id="MGI:1889205">
    <property type="gene designation" value="Cpq"/>
</dbReference>
<dbReference type="VEuPathDB" id="HostDB:ENSMUSG00000039007"/>
<dbReference type="eggNOG" id="KOG2195">
    <property type="taxonomic scope" value="Eukaryota"/>
</dbReference>
<dbReference type="GeneTree" id="ENSGT00390000018110"/>
<dbReference type="HOGENOM" id="CLU_033697_1_1_1"/>
<dbReference type="InParanoid" id="Q9WVJ3"/>
<dbReference type="OMA" id="IVFYNRP"/>
<dbReference type="OrthoDB" id="10013407at2759"/>
<dbReference type="PhylomeDB" id="Q9WVJ3"/>
<dbReference type="TreeFam" id="TF323248"/>
<dbReference type="BioGRID-ORCS" id="54381">
    <property type="hits" value="4 hits in 77 CRISPR screens"/>
</dbReference>
<dbReference type="ChiTaRS" id="Cpq">
    <property type="organism name" value="mouse"/>
</dbReference>
<dbReference type="PRO" id="PR:Q9WVJ3"/>
<dbReference type="Proteomes" id="UP000000589">
    <property type="component" value="Chromosome 15"/>
</dbReference>
<dbReference type="RNAct" id="Q9WVJ3">
    <property type="molecule type" value="protein"/>
</dbReference>
<dbReference type="Bgee" id="ENSMUSG00000039007">
    <property type="expression patterns" value="Expressed in epithelium of lens and 225 other cell types or tissues"/>
</dbReference>
<dbReference type="ExpressionAtlas" id="Q9WVJ3">
    <property type="expression patterns" value="baseline and differential"/>
</dbReference>
<dbReference type="GO" id="GO:0005737">
    <property type="term" value="C:cytoplasm"/>
    <property type="evidence" value="ECO:0000250"/>
    <property type="project" value="UniProtKB"/>
</dbReference>
<dbReference type="GO" id="GO:0005783">
    <property type="term" value="C:endoplasmic reticulum"/>
    <property type="evidence" value="ECO:0000250"/>
    <property type="project" value="UniProtKB"/>
</dbReference>
<dbReference type="GO" id="GO:0005615">
    <property type="term" value="C:extracellular space"/>
    <property type="evidence" value="ECO:0007005"/>
    <property type="project" value="BHF-UCL"/>
</dbReference>
<dbReference type="GO" id="GO:0005794">
    <property type="term" value="C:Golgi apparatus"/>
    <property type="evidence" value="ECO:0000250"/>
    <property type="project" value="UniProtKB"/>
</dbReference>
<dbReference type="GO" id="GO:0005764">
    <property type="term" value="C:lysosome"/>
    <property type="evidence" value="ECO:0000314"/>
    <property type="project" value="MGI"/>
</dbReference>
<dbReference type="GO" id="GO:0004180">
    <property type="term" value="F:carboxypeptidase activity"/>
    <property type="evidence" value="ECO:0007669"/>
    <property type="project" value="UniProtKB-KW"/>
</dbReference>
<dbReference type="GO" id="GO:0046872">
    <property type="term" value="F:metal ion binding"/>
    <property type="evidence" value="ECO:0007669"/>
    <property type="project" value="UniProtKB-KW"/>
</dbReference>
<dbReference type="GO" id="GO:0070573">
    <property type="term" value="F:metallodipeptidase activity"/>
    <property type="evidence" value="ECO:0000250"/>
    <property type="project" value="UniProtKB"/>
</dbReference>
<dbReference type="GO" id="GO:0042803">
    <property type="term" value="F:protein homodimerization activity"/>
    <property type="evidence" value="ECO:0000250"/>
    <property type="project" value="UniProtKB"/>
</dbReference>
<dbReference type="GO" id="GO:0043171">
    <property type="term" value="P:peptide catabolic process"/>
    <property type="evidence" value="ECO:0000250"/>
    <property type="project" value="UniProtKB"/>
</dbReference>
<dbReference type="GO" id="GO:0006508">
    <property type="term" value="P:proteolysis"/>
    <property type="evidence" value="ECO:0000250"/>
    <property type="project" value="UniProtKB"/>
</dbReference>
<dbReference type="GO" id="GO:0006590">
    <property type="term" value="P:thyroid hormone generation"/>
    <property type="evidence" value="ECO:0000250"/>
    <property type="project" value="UniProtKB"/>
</dbReference>
<dbReference type="GO" id="GO:0042246">
    <property type="term" value="P:tissue regeneration"/>
    <property type="evidence" value="ECO:0000250"/>
    <property type="project" value="UniProtKB"/>
</dbReference>
<dbReference type="CDD" id="cd03883">
    <property type="entry name" value="M28_Pgcp_like"/>
    <property type="match status" value="1"/>
</dbReference>
<dbReference type="FunFam" id="3.40.630.10:FF:000036">
    <property type="entry name" value="Carboxypeptidase Q"/>
    <property type="match status" value="1"/>
</dbReference>
<dbReference type="FunFam" id="3.40.630.10:FF:000112">
    <property type="entry name" value="Carboxypeptidase Q"/>
    <property type="match status" value="1"/>
</dbReference>
<dbReference type="FunFam" id="3.50.30.30:FF:000009">
    <property type="entry name" value="Carboxypeptidase Q"/>
    <property type="match status" value="1"/>
</dbReference>
<dbReference type="Gene3D" id="3.50.30.30">
    <property type="match status" value="1"/>
</dbReference>
<dbReference type="Gene3D" id="3.40.630.10">
    <property type="entry name" value="Zn peptidases"/>
    <property type="match status" value="1"/>
</dbReference>
<dbReference type="InterPro" id="IPR039866">
    <property type="entry name" value="CPQ"/>
</dbReference>
<dbReference type="InterPro" id="IPR007484">
    <property type="entry name" value="Peptidase_M28"/>
</dbReference>
<dbReference type="PANTHER" id="PTHR12053:SF3">
    <property type="entry name" value="CARBOXYPEPTIDASE Q"/>
    <property type="match status" value="1"/>
</dbReference>
<dbReference type="PANTHER" id="PTHR12053">
    <property type="entry name" value="PROTEASE FAMILY M28 PLASMA GLUTAMATE CARBOXYPEPTIDASE-RELATED"/>
    <property type="match status" value="1"/>
</dbReference>
<dbReference type="Pfam" id="PF04389">
    <property type="entry name" value="Peptidase_M28"/>
    <property type="match status" value="1"/>
</dbReference>
<dbReference type="SUPFAM" id="SSF53187">
    <property type="entry name" value="Zn-dependent exopeptidases"/>
    <property type="match status" value="1"/>
</dbReference>
<proteinExistence type="evidence at protein level"/>